<protein>
    <recommendedName>
        <fullName evidence="1">Anhydro-N-acetylmuramic acid kinase</fullName>
        <ecNumber evidence="1">2.7.1.170</ecNumber>
    </recommendedName>
    <alternativeName>
        <fullName evidence="1">AnhMurNAc kinase</fullName>
    </alternativeName>
</protein>
<feature type="chain" id="PRO_1000067354" description="Anhydro-N-acetylmuramic acid kinase">
    <location>
        <begin position="1"/>
        <end position="367"/>
    </location>
</feature>
<feature type="binding site" evidence="1">
    <location>
        <begin position="13"/>
        <end position="20"/>
    </location>
    <ligand>
        <name>ATP</name>
        <dbReference type="ChEBI" id="CHEBI:30616"/>
    </ligand>
</feature>
<dbReference type="EC" id="2.7.1.170" evidence="1"/>
<dbReference type="EMBL" id="AM421808">
    <property type="protein sequence ID" value="CAM10959.1"/>
    <property type="molecule type" value="Genomic_DNA"/>
</dbReference>
<dbReference type="SMR" id="A1KVQ5"/>
<dbReference type="KEGG" id="nmc:NMC1788"/>
<dbReference type="HOGENOM" id="CLU_038782_0_0_4"/>
<dbReference type="UniPathway" id="UPA00343"/>
<dbReference type="UniPathway" id="UPA00544"/>
<dbReference type="Proteomes" id="UP000002286">
    <property type="component" value="Chromosome"/>
</dbReference>
<dbReference type="GO" id="GO:0005524">
    <property type="term" value="F:ATP binding"/>
    <property type="evidence" value="ECO:0007669"/>
    <property type="project" value="UniProtKB-UniRule"/>
</dbReference>
<dbReference type="GO" id="GO:0016301">
    <property type="term" value="F:kinase activity"/>
    <property type="evidence" value="ECO:0007669"/>
    <property type="project" value="UniProtKB-KW"/>
</dbReference>
<dbReference type="GO" id="GO:0016773">
    <property type="term" value="F:phosphotransferase activity, alcohol group as acceptor"/>
    <property type="evidence" value="ECO:0007669"/>
    <property type="project" value="UniProtKB-UniRule"/>
</dbReference>
<dbReference type="GO" id="GO:0097175">
    <property type="term" value="P:1,6-anhydro-N-acetyl-beta-muramic acid catabolic process"/>
    <property type="evidence" value="ECO:0007669"/>
    <property type="project" value="UniProtKB-UniRule"/>
</dbReference>
<dbReference type="GO" id="GO:0006040">
    <property type="term" value="P:amino sugar metabolic process"/>
    <property type="evidence" value="ECO:0007669"/>
    <property type="project" value="InterPro"/>
</dbReference>
<dbReference type="GO" id="GO:0009254">
    <property type="term" value="P:peptidoglycan turnover"/>
    <property type="evidence" value="ECO:0007669"/>
    <property type="project" value="UniProtKB-UniRule"/>
</dbReference>
<dbReference type="CDD" id="cd24050">
    <property type="entry name" value="ASKHA_NBD_ANMK"/>
    <property type="match status" value="1"/>
</dbReference>
<dbReference type="Gene3D" id="3.30.420.40">
    <property type="match status" value="2"/>
</dbReference>
<dbReference type="HAMAP" id="MF_01270">
    <property type="entry name" value="AnhMurNAc_kinase"/>
    <property type="match status" value="1"/>
</dbReference>
<dbReference type="InterPro" id="IPR005338">
    <property type="entry name" value="Anhydro_N_Ac-Mur_kinase"/>
</dbReference>
<dbReference type="InterPro" id="IPR043129">
    <property type="entry name" value="ATPase_NBD"/>
</dbReference>
<dbReference type="NCBIfam" id="NF007139">
    <property type="entry name" value="PRK09585.1-3"/>
    <property type="match status" value="1"/>
</dbReference>
<dbReference type="PANTHER" id="PTHR30605">
    <property type="entry name" value="ANHYDRO-N-ACETYLMURAMIC ACID KINASE"/>
    <property type="match status" value="1"/>
</dbReference>
<dbReference type="PANTHER" id="PTHR30605:SF0">
    <property type="entry name" value="ANHYDRO-N-ACETYLMURAMIC ACID KINASE"/>
    <property type="match status" value="1"/>
</dbReference>
<dbReference type="Pfam" id="PF03702">
    <property type="entry name" value="AnmK"/>
    <property type="match status" value="1"/>
</dbReference>
<dbReference type="SUPFAM" id="SSF53067">
    <property type="entry name" value="Actin-like ATPase domain"/>
    <property type="match status" value="1"/>
</dbReference>
<accession>A1KVQ5</accession>
<evidence type="ECO:0000255" key="1">
    <source>
        <dbReference type="HAMAP-Rule" id="MF_01270"/>
    </source>
</evidence>
<name>ANMK_NEIMF</name>
<gene>
    <name evidence="1" type="primary">anmK</name>
    <name type="ordered locus">NMC1788</name>
</gene>
<proteinExistence type="inferred from homology"/>
<organism>
    <name type="scientific">Neisseria meningitidis serogroup C / serotype 2a (strain ATCC 700532 / DSM 15464 / FAM18)</name>
    <dbReference type="NCBI Taxonomy" id="272831"/>
    <lineage>
        <taxon>Bacteria</taxon>
        <taxon>Pseudomonadati</taxon>
        <taxon>Pseudomonadota</taxon>
        <taxon>Betaproteobacteria</taxon>
        <taxon>Neisseriales</taxon>
        <taxon>Neisseriaceae</taxon>
        <taxon>Neisseria</taxon>
    </lineage>
</organism>
<keyword id="KW-0067">ATP-binding</keyword>
<keyword id="KW-0119">Carbohydrate metabolism</keyword>
<keyword id="KW-0418">Kinase</keyword>
<keyword id="KW-0547">Nucleotide-binding</keyword>
<keyword id="KW-0808">Transferase</keyword>
<comment type="function">
    <text evidence="1">Catalyzes the specific phosphorylation of 1,6-anhydro-N-acetylmuramic acid (anhMurNAc) with the simultaneous cleavage of the 1,6-anhydro ring, generating MurNAc-6-P. Is required for the utilization of anhMurNAc either imported from the medium or derived from its own cell wall murein, and thus plays a role in cell wall recycling.</text>
</comment>
<comment type="catalytic activity">
    <reaction evidence="1">
        <text>1,6-anhydro-N-acetyl-beta-muramate + ATP + H2O = N-acetyl-D-muramate 6-phosphate + ADP + H(+)</text>
        <dbReference type="Rhea" id="RHEA:24952"/>
        <dbReference type="ChEBI" id="CHEBI:15377"/>
        <dbReference type="ChEBI" id="CHEBI:15378"/>
        <dbReference type="ChEBI" id="CHEBI:30616"/>
        <dbReference type="ChEBI" id="CHEBI:58690"/>
        <dbReference type="ChEBI" id="CHEBI:58722"/>
        <dbReference type="ChEBI" id="CHEBI:456216"/>
        <dbReference type="EC" id="2.7.1.170"/>
    </reaction>
</comment>
<comment type="pathway">
    <text evidence="1">Amino-sugar metabolism; 1,6-anhydro-N-acetylmuramate degradation.</text>
</comment>
<comment type="pathway">
    <text evidence="1">Cell wall biogenesis; peptidoglycan recycling.</text>
</comment>
<comment type="similarity">
    <text evidence="1">Belongs to the anhydro-N-acetylmuramic acid kinase family.</text>
</comment>
<sequence length="367" mass="40161">MMETQLYIGIMSGTSMDGADAVLIRMDGGKWLGAEGHAFTPYPDRLRRQLLDLQDTGADELHRSRILSQELSRLYAQTAAELLCSQNLAPSDITALGCHGQTVRHAPEHGYSIQLADLPLLAERTRIFTVGDFRSRDLAAGGQGAPLVPAFHEALFRDNRETRAVLNIGGIANISVLPPDAPAFGFDTGPGNMLMDAWTQAHWQLPYDKNGAKAAQGNILPQLLDRLLAHPYFARPHPKSTGRELFALNWLETYLDGGENRYDVLRTLSRFTAQTVFDAVSHAAADTRQMYICGGGIRNPVLMADLAECFGTRVSLHSTAELNLDPQWVEAAAFAWLAACWINRIPGSPHKATGASKPCILGAGYYY</sequence>
<reference key="1">
    <citation type="journal article" date="2007" name="PLoS Genet.">
        <title>Meningococcal genetic variation mechanisms viewed through comparative analysis of serogroup C strain FAM18.</title>
        <authorList>
            <person name="Bentley S.D."/>
            <person name="Vernikos G.S."/>
            <person name="Snyder L.A.S."/>
            <person name="Churcher C."/>
            <person name="Arrowsmith C."/>
            <person name="Chillingworth T."/>
            <person name="Cronin A."/>
            <person name="Davis P.H."/>
            <person name="Holroyd N.E."/>
            <person name="Jagels K."/>
            <person name="Maddison M."/>
            <person name="Moule S."/>
            <person name="Rabbinowitsch E."/>
            <person name="Sharp S."/>
            <person name="Unwin L."/>
            <person name="Whitehead S."/>
            <person name="Quail M.A."/>
            <person name="Achtman M."/>
            <person name="Barrell B.G."/>
            <person name="Saunders N.J."/>
            <person name="Parkhill J."/>
        </authorList>
    </citation>
    <scope>NUCLEOTIDE SEQUENCE [LARGE SCALE GENOMIC DNA]</scope>
    <source>
        <strain>ATCC 700532 / DSM 15464 / FAM18</strain>
    </source>
</reference>